<accession>Q8AAP0</accession>
<organism>
    <name type="scientific">Bacteroides thetaiotaomicron (strain ATCC 29148 / DSM 2079 / JCM 5827 / CCUG 10774 / NCTC 10582 / VPI-5482 / E50)</name>
    <dbReference type="NCBI Taxonomy" id="226186"/>
    <lineage>
        <taxon>Bacteria</taxon>
        <taxon>Pseudomonadati</taxon>
        <taxon>Bacteroidota</taxon>
        <taxon>Bacteroidia</taxon>
        <taxon>Bacteroidales</taxon>
        <taxon>Bacteroidaceae</taxon>
        <taxon>Bacteroides</taxon>
    </lineage>
</organism>
<proteinExistence type="inferred from homology"/>
<gene>
    <name evidence="1" type="primary">rpmI</name>
    <name type="ordered locus">BT_0424</name>
</gene>
<name>RL35_BACTN</name>
<protein>
    <recommendedName>
        <fullName evidence="1">Large ribosomal subunit protein bL35</fullName>
    </recommendedName>
    <alternativeName>
        <fullName evidence="3">50S ribosomal protein L35</fullName>
    </alternativeName>
</protein>
<comment type="similarity">
    <text evidence="1">Belongs to the bacterial ribosomal protein bL35 family.</text>
</comment>
<sequence length="65" mass="7450">MPKMKTNSGSKKRFTLTGTGKIKRKHAFHSHILTKKSKKRKRNLCYSTTVDTTNVSQVKELLAMK</sequence>
<dbReference type="EMBL" id="AE015928">
    <property type="protein sequence ID" value="AAO75531.1"/>
    <property type="molecule type" value="Genomic_DNA"/>
</dbReference>
<dbReference type="RefSeq" id="NP_809337.1">
    <property type="nucleotide sequence ID" value="NC_004663.1"/>
</dbReference>
<dbReference type="RefSeq" id="WP_004297539.1">
    <property type="nucleotide sequence ID" value="NZ_UYXG01000041.1"/>
</dbReference>
<dbReference type="SMR" id="Q8AAP0"/>
<dbReference type="FunCoup" id="Q8AAP0">
    <property type="interactions" value="336"/>
</dbReference>
<dbReference type="STRING" id="226186.BT_0424"/>
<dbReference type="PaxDb" id="226186-BT_0424"/>
<dbReference type="EnsemblBacteria" id="AAO75531">
    <property type="protein sequence ID" value="AAO75531"/>
    <property type="gene ID" value="BT_0424"/>
</dbReference>
<dbReference type="GeneID" id="93107243"/>
<dbReference type="KEGG" id="bth:BT_0424"/>
<dbReference type="PATRIC" id="fig|226186.12.peg.423"/>
<dbReference type="eggNOG" id="COG0291">
    <property type="taxonomic scope" value="Bacteria"/>
</dbReference>
<dbReference type="HOGENOM" id="CLU_169643_4_3_10"/>
<dbReference type="InParanoid" id="Q8AAP0"/>
<dbReference type="OrthoDB" id="47476at2"/>
<dbReference type="Proteomes" id="UP000001414">
    <property type="component" value="Chromosome"/>
</dbReference>
<dbReference type="GO" id="GO:0022625">
    <property type="term" value="C:cytosolic large ribosomal subunit"/>
    <property type="evidence" value="ECO:0000318"/>
    <property type="project" value="GO_Central"/>
</dbReference>
<dbReference type="GO" id="GO:0003735">
    <property type="term" value="F:structural constituent of ribosome"/>
    <property type="evidence" value="ECO:0000318"/>
    <property type="project" value="GO_Central"/>
</dbReference>
<dbReference type="GO" id="GO:0006412">
    <property type="term" value="P:translation"/>
    <property type="evidence" value="ECO:0007669"/>
    <property type="project" value="UniProtKB-UniRule"/>
</dbReference>
<dbReference type="FunFam" id="4.10.410.60:FF:000001">
    <property type="entry name" value="50S ribosomal protein L35"/>
    <property type="match status" value="1"/>
</dbReference>
<dbReference type="Gene3D" id="4.10.410.60">
    <property type="match status" value="1"/>
</dbReference>
<dbReference type="HAMAP" id="MF_00514">
    <property type="entry name" value="Ribosomal_bL35"/>
    <property type="match status" value="1"/>
</dbReference>
<dbReference type="InterPro" id="IPR001706">
    <property type="entry name" value="Ribosomal_bL35"/>
</dbReference>
<dbReference type="InterPro" id="IPR021137">
    <property type="entry name" value="Ribosomal_bL35-like"/>
</dbReference>
<dbReference type="InterPro" id="IPR018265">
    <property type="entry name" value="Ribosomal_bL35_CS"/>
</dbReference>
<dbReference type="InterPro" id="IPR037229">
    <property type="entry name" value="Ribosomal_bL35_sf"/>
</dbReference>
<dbReference type="NCBIfam" id="TIGR00001">
    <property type="entry name" value="rpmI_bact"/>
    <property type="match status" value="1"/>
</dbReference>
<dbReference type="PANTHER" id="PTHR33343">
    <property type="entry name" value="54S RIBOSOMAL PROTEIN BL35M"/>
    <property type="match status" value="1"/>
</dbReference>
<dbReference type="PANTHER" id="PTHR33343:SF1">
    <property type="entry name" value="LARGE RIBOSOMAL SUBUNIT PROTEIN BL35M"/>
    <property type="match status" value="1"/>
</dbReference>
<dbReference type="Pfam" id="PF01632">
    <property type="entry name" value="Ribosomal_L35p"/>
    <property type="match status" value="1"/>
</dbReference>
<dbReference type="PRINTS" id="PR00064">
    <property type="entry name" value="RIBOSOMALL35"/>
</dbReference>
<dbReference type="SUPFAM" id="SSF143034">
    <property type="entry name" value="L35p-like"/>
    <property type="match status" value="1"/>
</dbReference>
<dbReference type="PROSITE" id="PS00936">
    <property type="entry name" value="RIBOSOMAL_L35"/>
    <property type="match status" value="1"/>
</dbReference>
<keyword id="KW-1185">Reference proteome</keyword>
<keyword id="KW-0687">Ribonucleoprotein</keyword>
<keyword id="KW-0689">Ribosomal protein</keyword>
<reference key="1">
    <citation type="journal article" date="2003" name="Science">
        <title>A genomic view of the human-Bacteroides thetaiotaomicron symbiosis.</title>
        <authorList>
            <person name="Xu J."/>
            <person name="Bjursell M.K."/>
            <person name="Himrod J."/>
            <person name="Deng S."/>
            <person name="Carmichael L.K."/>
            <person name="Chiang H.C."/>
            <person name="Hooper L.V."/>
            <person name="Gordon J.I."/>
        </authorList>
    </citation>
    <scope>NUCLEOTIDE SEQUENCE [LARGE SCALE GENOMIC DNA]</scope>
    <source>
        <strain>ATCC 29148 / DSM 2079 / JCM 5827 / CCUG 10774 / NCTC 10582 / VPI-5482 / E50</strain>
    </source>
</reference>
<evidence type="ECO:0000255" key="1">
    <source>
        <dbReference type="HAMAP-Rule" id="MF_00514"/>
    </source>
</evidence>
<evidence type="ECO:0000256" key="2">
    <source>
        <dbReference type="SAM" id="MobiDB-lite"/>
    </source>
</evidence>
<evidence type="ECO:0000305" key="3"/>
<feature type="chain" id="PRO_0000177327" description="Large ribosomal subunit protein bL35">
    <location>
        <begin position="1"/>
        <end position="65"/>
    </location>
</feature>
<feature type="region of interest" description="Disordered" evidence="2">
    <location>
        <begin position="1"/>
        <end position="20"/>
    </location>
</feature>